<keyword id="KW-0963">Cytoplasm</keyword>
<keyword id="KW-0433">Leucine-rich repeat</keyword>
<keyword id="KW-1185">Reference proteome</keyword>
<keyword id="KW-0677">Repeat</keyword>
<evidence type="ECO:0000250" key="1"/>
<evidence type="ECO:0000256" key="2">
    <source>
        <dbReference type="SAM" id="MobiDB-lite"/>
    </source>
</evidence>
<evidence type="ECO:0000305" key="3"/>
<dbReference type="EMBL" id="BC063361">
    <property type="protein sequence ID" value="AAH63361.1"/>
    <property type="molecule type" value="mRNA"/>
</dbReference>
<dbReference type="RefSeq" id="NP_989177.1">
    <property type="nucleotide sequence ID" value="NM_203846.1"/>
</dbReference>
<dbReference type="SMR" id="Q6P4K6"/>
<dbReference type="FunCoup" id="Q6P4K6">
    <property type="interactions" value="2294"/>
</dbReference>
<dbReference type="STRING" id="8364.ENSXETP00000044578"/>
<dbReference type="PaxDb" id="8364-ENSXETP00000059904"/>
<dbReference type="GeneID" id="394784"/>
<dbReference type="KEGG" id="xtr:394784"/>
<dbReference type="AGR" id="Xenbase:XB-GENE-947946"/>
<dbReference type="CTD" id="114790"/>
<dbReference type="Xenbase" id="XB-GENE-947946">
    <property type="gene designation" value="stk11ip"/>
</dbReference>
<dbReference type="eggNOG" id="KOG1859">
    <property type="taxonomic scope" value="Eukaryota"/>
</dbReference>
<dbReference type="InParanoid" id="Q6P4K6"/>
<dbReference type="OMA" id="MVKFGRQ"/>
<dbReference type="OrthoDB" id="7451790at2759"/>
<dbReference type="Reactome" id="R-XTR-6798695">
    <property type="pathway name" value="Neutrophil degranulation"/>
</dbReference>
<dbReference type="Proteomes" id="UP000008143">
    <property type="component" value="Chromosome 9"/>
</dbReference>
<dbReference type="GO" id="GO:0005737">
    <property type="term" value="C:cytoplasm"/>
    <property type="evidence" value="ECO:0007669"/>
    <property type="project" value="UniProtKB-SubCell"/>
</dbReference>
<dbReference type="FunFam" id="3.80.10.10:FF:000527">
    <property type="entry name" value="Serine/threonine kinase 11 interacting protein"/>
    <property type="match status" value="1"/>
</dbReference>
<dbReference type="Gene3D" id="3.80.10.10">
    <property type="entry name" value="Ribonuclease Inhibitor"/>
    <property type="match status" value="2"/>
</dbReference>
<dbReference type="InterPro" id="IPR001611">
    <property type="entry name" value="Leu-rich_rpt"/>
</dbReference>
<dbReference type="InterPro" id="IPR025875">
    <property type="entry name" value="Leu-rich_rpt_4"/>
</dbReference>
<dbReference type="InterPro" id="IPR003591">
    <property type="entry name" value="Leu-rich_rpt_typical-subtyp"/>
</dbReference>
<dbReference type="InterPro" id="IPR031782">
    <property type="entry name" value="LIP1_N"/>
</dbReference>
<dbReference type="InterPro" id="IPR032675">
    <property type="entry name" value="LRR_dom_sf"/>
</dbReference>
<dbReference type="PANTHER" id="PTHR15454">
    <property type="entry name" value="NISCHARIN RELATED"/>
    <property type="match status" value="1"/>
</dbReference>
<dbReference type="PANTHER" id="PTHR15454:SF69">
    <property type="entry name" value="SERINE_THREONINE-PROTEIN KINASE 11-INTERACTING PROTEIN"/>
    <property type="match status" value="1"/>
</dbReference>
<dbReference type="Pfam" id="PF15904">
    <property type="entry name" value="LIP1"/>
    <property type="match status" value="1"/>
</dbReference>
<dbReference type="Pfam" id="PF12799">
    <property type="entry name" value="LRR_4"/>
    <property type="match status" value="1"/>
</dbReference>
<dbReference type="Pfam" id="PF25357">
    <property type="entry name" value="PH_S11IP"/>
    <property type="match status" value="1"/>
</dbReference>
<dbReference type="SMART" id="SM00365">
    <property type="entry name" value="LRR_SD22"/>
    <property type="match status" value="4"/>
</dbReference>
<dbReference type="SMART" id="SM00369">
    <property type="entry name" value="LRR_TYP"/>
    <property type="match status" value="3"/>
</dbReference>
<dbReference type="SUPFAM" id="SSF52075">
    <property type="entry name" value="Outer arm dynein light chain 1"/>
    <property type="match status" value="1"/>
</dbReference>
<dbReference type="PROSITE" id="PS51450">
    <property type="entry name" value="LRR"/>
    <property type="match status" value="6"/>
</dbReference>
<sequence length="1129" mass="126056">MPSEVPESLVQALAQILHEHGDKVLDGSRILALLTPCLQVVTRLFEQLFPRGPGTGFQALPAHPADSVPILRAQFMLDMLQKTPSLKLVHPAECPRQFDVNIFPFKSLRSLELRCLPPHCLRGLRSVYSQLEVLTCYRCVSSLEEVIALCGGDLSSALPWLVLHTLDFSYNTLKNLDGSLELLNSLKILDLSHNQITECGSYLKVLSELQYLNLGYNHLTAVPELSVGNTAKLHSLILKHNQLSGTSGLENLPNLQHLDLSYNLLLEHSQLSGLARLHNLKQLFLEGNPLYFQKDYRALTAQHLSHKASDNVLLDGKLLSSSEIMNAQAFGEKVRLQPSSSATESSCTGDLTDSYSAAEKSAPRLPRKKSRVKVRTASISERSDSEYERRGQPIVLQHQREIERTDSFREQYGEDWLQYRPHLEGELDPEYVNRPHSPPPRASPSPTAPSSVPKQKSPVPAPEPSPSPKSGHVAPDDQLMEKAEEGLEEHLWGLQEAKKPNEEEGLIGGALCSPVVVCPVLNGQPRNPDWPWVFLRITLHFLLEMDPERGRILLKRELRSLRGIQTSLAPWKCNGEEQELPLLTLSFDSVCEEKQTVNYIVLDNSPESSVTTLLDLLRPMLERNLREKAESQDELTRMQCLKCKAEFRNEVDGGDIYSPESLQQGKEPTAGLHRNHTGDASCPSCGSLHIILAPLNPTGETSTPLRPLSAEPPQGDDGGGGLAAKSFYLSEDEDSSETDSSPNTAPSEAESTIFYSFDTEGQDQQSAQDTGRSSLTGSYKYTALNQSGALSQDGWQISPGPASTLDFRLVDHRLKLYLDMEVLNGDMEEFRCCMKVPVIRFGKVSEFWAVVAVSNQKIYFLEITGEIRDNPSDWLQPIESQSLTSLARLHVGLQEHSLHLGFGGSGGAYTLLTRNQQHCRVFHKHMLDVLAELPARYLGNIQQSSEEPITPQHRLWPFLQDKVGAPESNAPPRFLYVPLFFLREDIVSPNADSPCANANSQLPLLNTASPAALIQGAAAAAPLSLLVTRTHMYLLEEDHQWLPDTLDTELPDSVQMKEKQPISNISSVHLFQSATLHLRIHLYNETQQNESAWLLWTEDPDRTREIVEWLREPWEAEYHIHFNPVTHNT</sequence>
<name>S11IP_XENTR</name>
<feature type="chain" id="PRO_0000317466" description="Serine/threonine-protein kinase 11-interacting protein">
    <location>
        <begin position="1"/>
        <end position="1129"/>
    </location>
</feature>
<feature type="repeat" description="LRR 1">
    <location>
        <begin position="107"/>
        <end position="128"/>
    </location>
</feature>
<feature type="repeat" description="LRR 2">
    <location>
        <begin position="130"/>
        <end position="150"/>
    </location>
</feature>
<feature type="repeat" description="LRR 3">
    <location>
        <begin position="162"/>
        <end position="183"/>
    </location>
</feature>
<feature type="repeat" description="LRR 4">
    <location>
        <begin position="185"/>
        <end position="206"/>
    </location>
</feature>
<feature type="repeat" description="LRR 5">
    <location>
        <begin position="208"/>
        <end position="229"/>
    </location>
</feature>
<feature type="repeat" description="LRR 6">
    <location>
        <begin position="232"/>
        <end position="253"/>
    </location>
</feature>
<feature type="repeat" description="LRR 7">
    <location>
        <begin position="254"/>
        <end position="275"/>
    </location>
</feature>
<feature type="repeat" description="LRR 8">
    <location>
        <begin position="279"/>
        <end position="300"/>
    </location>
</feature>
<feature type="region of interest" description="Disordered" evidence="2">
    <location>
        <begin position="335"/>
        <end position="392"/>
    </location>
</feature>
<feature type="region of interest" description="Disordered" evidence="2">
    <location>
        <begin position="428"/>
        <end position="475"/>
    </location>
</feature>
<feature type="region of interest" description="Disordered" evidence="2">
    <location>
        <begin position="654"/>
        <end position="678"/>
    </location>
</feature>
<feature type="region of interest" description="Disordered" evidence="2">
    <location>
        <begin position="696"/>
        <end position="724"/>
    </location>
</feature>
<feature type="compositionally biased region" description="Polar residues" evidence="2">
    <location>
        <begin position="337"/>
        <end position="355"/>
    </location>
</feature>
<feature type="compositionally biased region" description="Basic residues" evidence="2">
    <location>
        <begin position="365"/>
        <end position="374"/>
    </location>
</feature>
<feature type="compositionally biased region" description="Basic and acidic residues" evidence="2">
    <location>
        <begin position="381"/>
        <end position="391"/>
    </location>
</feature>
<feature type="compositionally biased region" description="Pro residues" evidence="2">
    <location>
        <begin position="436"/>
        <end position="447"/>
    </location>
</feature>
<feature type="compositionally biased region" description="Low complexity" evidence="2">
    <location>
        <begin position="448"/>
        <end position="458"/>
    </location>
</feature>
<protein>
    <recommendedName>
        <fullName>Serine/threonine-protein kinase 11-interacting protein</fullName>
    </recommendedName>
</protein>
<proteinExistence type="evidence at transcript level"/>
<reference key="1">
    <citation type="submission" date="2003-12" db="EMBL/GenBank/DDBJ databases">
        <authorList>
            <consortium name="NIH - Xenopus Gene Collection (XGC) project"/>
        </authorList>
    </citation>
    <scope>NUCLEOTIDE SEQUENCE [LARGE SCALE MRNA]</scope>
    <source>
        <tissue>Embryo</tissue>
    </source>
</reference>
<accession>Q6P4K6</accession>
<comment type="subcellular location">
    <subcellularLocation>
        <location evidence="1">Cytoplasm</location>
    </subcellularLocation>
</comment>
<comment type="similarity">
    <text evidence="3">Belongs to the STK11IP family.</text>
</comment>
<organism>
    <name type="scientific">Xenopus tropicalis</name>
    <name type="common">Western clawed frog</name>
    <name type="synonym">Silurana tropicalis</name>
    <dbReference type="NCBI Taxonomy" id="8364"/>
    <lineage>
        <taxon>Eukaryota</taxon>
        <taxon>Metazoa</taxon>
        <taxon>Chordata</taxon>
        <taxon>Craniata</taxon>
        <taxon>Vertebrata</taxon>
        <taxon>Euteleostomi</taxon>
        <taxon>Amphibia</taxon>
        <taxon>Batrachia</taxon>
        <taxon>Anura</taxon>
        <taxon>Pipoidea</taxon>
        <taxon>Pipidae</taxon>
        <taxon>Xenopodinae</taxon>
        <taxon>Xenopus</taxon>
        <taxon>Silurana</taxon>
    </lineage>
</organism>
<gene>
    <name type="primary">stk11ip</name>
</gene>